<reference key="1">
    <citation type="journal article" date="2004" name="Genome Res.">
        <title>The status, quality, and expansion of the NIH full-length cDNA project: the Mammalian Gene Collection (MGC).</title>
        <authorList>
            <consortium name="The MGC Project Team"/>
        </authorList>
    </citation>
    <scope>NUCLEOTIDE SEQUENCE [LARGE SCALE MRNA]</scope>
    <source>
        <strain>129</strain>
        <strain>FVB/N</strain>
        <tissue>Kidney</tissue>
        <tissue>Mammary tumor</tissue>
    </source>
</reference>
<reference key="2">
    <citation type="journal article" date="2010" name="Cell">
        <title>A tissue-specific atlas of mouse protein phosphorylation and expression.</title>
        <authorList>
            <person name="Huttlin E.L."/>
            <person name="Jedrychowski M.P."/>
            <person name="Elias J.E."/>
            <person name="Goswami T."/>
            <person name="Rad R."/>
            <person name="Beausoleil S.A."/>
            <person name="Villen J."/>
            <person name="Haas W."/>
            <person name="Sowa M.E."/>
            <person name="Gygi S.P."/>
        </authorList>
    </citation>
    <scope>IDENTIFICATION BY MASS SPECTROMETRY [LARGE SCALE ANALYSIS]</scope>
    <source>
        <tissue>Brain</tissue>
        <tissue>Lung</tissue>
    </source>
</reference>
<sequence length="807" mass="90821">MRLSPVSLRLSRGPALLALALPLAAALAFSDETLDKVTKSEGYCSRILRAQGTRREGYTEFSLRVEGDPDFYKPGSSYRVTLSAAPPSYFRGFTLIALKENQEGDKEEDHAGTFQIIDEEETQFMSNCPVAVTESTPRRRTRIQVFWIAPPTGTGCVILKASIVQKRIIYFQDEGSLTKKLCEQDPTLDGVTDRPILDCCACGTAKYRLTFYGNWSEKTHPKDYPRRANHWSAIIGGSHSKNYVLWEYGGYASEGVKQVAELGSPVKMEEEIRQQSDEVLTVIKAKAQWPAWQPVNVRAAPSAEFSVDRTRHLMSFLTMMGPSPDWNVGLSAEDLCTKECGWVQKVVQDLIPWDAGTDSGVTYESPNKPTIPQEKIRPLTSLDHPQSPFYDPEGGSITQVARVVIERIARKGEQCNIVPDNVDDIVADLAPEEKDEDDTPETCIYSNWSPWSACSSSTCEKGKRMRQRMLKAQLDLSVPCPDTQDFQPCMGPGCSDEDGSTCTMSEWITWSPCSVSCGMGMRSRERYVKQFPEDGSVCMLPTEETEKCTVNEECSPSSCLVTEWGEWDDCSATCGMGMKKRHRMVKMSPADGSMCKAETSQAEKCMMPECHTIPCLLSPWSEWSDCSVTCGKGMRTRQRMLKSLAELGDCNEDLEQAEKCMLPECPIDCELSEWSQWSECNKSCGKGHMIRTRTIQMEPQFGGVPCPETVQRKKCRTRKCLRSPSVQKLRWREARESRRSEQLREESDGEQFPGCRMRPWTAWSECTKLCGGGIQERYMTVKKRFKSSQFTSCKDKKEIRACNVHPC</sequence>
<proteinExistence type="evidence at protein level"/>
<feature type="signal peptide" evidence="3">
    <location>
        <begin position="1"/>
        <end position="28"/>
    </location>
</feature>
<feature type="chain" id="PRO_0000035866" description="Spondin-1">
    <location>
        <begin position="29"/>
        <end position="807"/>
    </location>
</feature>
<feature type="domain" description="Reelin" evidence="5">
    <location>
        <begin position="29"/>
        <end position="194"/>
    </location>
</feature>
<feature type="domain" description="Spondin" evidence="6">
    <location>
        <begin position="195"/>
        <end position="388"/>
    </location>
</feature>
<feature type="domain" description="TSP type-1 1" evidence="4">
    <location>
        <begin position="442"/>
        <end position="495"/>
    </location>
</feature>
<feature type="domain" description="TSP type-1 2" evidence="4">
    <location>
        <begin position="501"/>
        <end position="555"/>
    </location>
</feature>
<feature type="domain" description="TSP type-1 3" evidence="4">
    <location>
        <begin position="558"/>
        <end position="611"/>
    </location>
</feature>
<feature type="domain" description="TSP type-1 4" evidence="4">
    <location>
        <begin position="614"/>
        <end position="666"/>
    </location>
</feature>
<feature type="domain" description="TSP type-1 5" evidence="4">
    <location>
        <begin position="668"/>
        <end position="721"/>
    </location>
</feature>
<feature type="domain" description="TSP type-1 6" evidence="4">
    <location>
        <begin position="754"/>
        <end position="806"/>
    </location>
</feature>
<feature type="region of interest" description="Disordered" evidence="7">
    <location>
        <begin position="732"/>
        <end position="752"/>
    </location>
</feature>
<feature type="compositionally biased region" description="Basic and acidic residues" evidence="7">
    <location>
        <begin position="732"/>
        <end position="746"/>
    </location>
</feature>
<feature type="binding site" evidence="2">
    <location>
        <position position="325"/>
    </location>
    <ligand>
        <name>Ca(2+)</name>
        <dbReference type="ChEBI" id="CHEBI:29108"/>
    </ligand>
</feature>
<feature type="binding site" evidence="2">
    <location>
        <position position="354"/>
    </location>
    <ligand>
        <name>Ca(2+)</name>
        <dbReference type="ChEBI" id="CHEBI:29108"/>
    </ligand>
</feature>
<feature type="binding site" evidence="2">
    <location>
        <position position="358"/>
    </location>
    <ligand>
        <name>Ca(2+)</name>
        <dbReference type="ChEBI" id="CHEBI:29108"/>
    </ligand>
</feature>
<feature type="glycosylation site" description="N-linked (GlcNAc...) asparagine" evidence="3">
    <location>
        <position position="214"/>
    </location>
</feature>
<feature type="glycosylation site" description="N-linked (GlcNAc...) asparagine" evidence="3">
    <location>
        <position position="681"/>
    </location>
</feature>
<feature type="disulfide bond" evidence="4">
    <location>
        <begin position="44"/>
        <end position="128"/>
    </location>
</feature>
<feature type="disulfide bond" evidence="4">
    <location>
        <begin position="156"/>
        <end position="182"/>
    </location>
</feature>
<feature type="disulfide bond" evidence="2">
    <location>
        <begin position="199"/>
        <end position="336"/>
    </location>
</feature>
<feature type="disulfide bond" evidence="2">
    <location>
        <begin position="200"/>
        <end position="340"/>
    </location>
</feature>
<feature type="disulfide bond" evidence="2">
    <location>
        <begin position="202"/>
        <end position="415"/>
    </location>
</feature>
<feature type="disulfide bond" evidence="4">
    <location>
        <begin position="443"/>
        <end position="480"/>
    </location>
</feature>
<feature type="disulfide bond" evidence="4">
    <location>
        <begin position="454"/>
        <end position="489"/>
    </location>
</feature>
<feature type="disulfide bond" evidence="4">
    <location>
        <begin position="459"/>
        <end position="494"/>
    </location>
</feature>
<feature type="disulfide bond" evidence="4">
    <location>
        <begin position="502"/>
        <end position="538"/>
    </location>
</feature>
<feature type="disulfide bond" evidence="4">
    <location>
        <begin position="513"/>
        <end position="517"/>
    </location>
</feature>
<feature type="disulfide bond" evidence="4">
    <location>
        <begin position="548"/>
        <end position="554"/>
    </location>
</feature>
<feature type="disulfide bond" evidence="4">
    <location>
        <begin position="559"/>
        <end position="595"/>
    </location>
</feature>
<feature type="disulfide bond" evidence="4">
    <location>
        <begin position="570"/>
        <end position="574"/>
    </location>
</feature>
<feature type="disulfide bond" evidence="4">
    <location>
        <begin position="605"/>
        <end position="610"/>
    </location>
</feature>
<feature type="disulfide bond" evidence="4">
    <location>
        <begin position="615"/>
        <end position="650"/>
    </location>
</feature>
<feature type="disulfide bond" evidence="4">
    <location>
        <begin position="626"/>
        <end position="630"/>
    </location>
</feature>
<feature type="disulfide bond" evidence="4">
    <location>
        <begin position="660"/>
        <end position="665"/>
    </location>
</feature>
<organism>
    <name type="scientific">Mus musculus</name>
    <name type="common">Mouse</name>
    <dbReference type="NCBI Taxonomy" id="10090"/>
    <lineage>
        <taxon>Eukaryota</taxon>
        <taxon>Metazoa</taxon>
        <taxon>Chordata</taxon>
        <taxon>Craniata</taxon>
        <taxon>Vertebrata</taxon>
        <taxon>Euteleostomi</taxon>
        <taxon>Mammalia</taxon>
        <taxon>Eutheria</taxon>
        <taxon>Euarchontoglires</taxon>
        <taxon>Glires</taxon>
        <taxon>Rodentia</taxon>
        <taxon>Myomorpha</taxon>
        <taxon>Muroidea</taxon>
        <taxon>Muridae</taxon>
        <taxon>Murinae</taxon>
        <taxon>Mus</taxon>
        <taxon>Mus</taxon>
    </lineage>
</organism>
<dbReference type="EMBL" id="BC020531">
    <property type="protein sequence ID" value="AAH20531.1"/>
    <property type="molecule type" value="mRNA"/>
</dbReference>
<dbReference type="EMBL" id="BC030339">
    <property type="protein sequence ID" value="AAH30339.1"/>
    <property type="status" value="ALT_INIT"/>
    <property type="molecule type" value="mRNA"/>
</dbReference>
<dbReference type="CCDS" id="CCDS21757.1"/>
<dbReference type="RefSeq" id="NP_663559.1">
    <property type="nucleotide sequence ID" value="NM_145584.2"/>
</dbReference>
<dbReference type="SMR" id="Q8VCC9"/>
<dbReference type="BioGRID" id="231439">
    <property type="interactions" value="3"/>
</dbReference>
<dbReference type="FunCoup" id="Q8VCC9">
    <property type="interactions" value="157"/>
</dbReference>
<dbReference type="IntAct" id="Q8VCC9">
    <property type="interactions" value="2"/>
</dbReference>
<dbReference type="STRING" id="10090.ENSMUSP00000041157"/>
<dbReference type="GlyConnect" id="2739">
    <property type="glycosylation" value="1 N-Linked glycan (1 site)"/>
</dbReference>
<dbReference type="GlyCosmos" id="Q8VCC9">
    <property type="glycosylation" value="2 sites, 1 glycan"/>
</dbReference>
<dbReference type="GlyGen" id="Q8VCC9">
    <property type="glycosylation" value="2 sites, 1 N-linked glycan (1 site)"/>
</dbReference>
<dbReference type="iPTMnet" id="Q8VCC9"/>
<dbReference type="PhosphoSitePlus" id="Q8VCC9"/>
<dbReference type="SwissPalm" id="Q8VCC9"/>
<dbReference type="jPOST" id="Q8VCC9"/>
<dbReference type="PaxDb" id="10090-ENSMUSP00000041157"/>
<dbReference type="ProteomicsDB" id="261574"/>
<dbReference type="Antibodypedia" id="62004">
    <property type="antibodies" value="164 antibodies from 26 providers"/>
</dbReference>
<dbReference type="DNASU" id="233744"/>
<dbReference type="Ensembl" id="ENSMUST00000046687.16">
    <property type="protein sequence ID" value="ENSMUSP00000041157.10"/>
    <property type="gene ID" value="ENSMUSG00000038156.17"/>
</dbReference>
<dbReference type="GeneID" id="233744"/>
<dbReference type="KEGG" id="mmu:233744"/>
<dbReference type="UCSC" id="uc009jhv.2">
    <property type="organism name" value="mouse"/>
</dbReference>
<dbReference type="AGR" id="MGI:2385287"/>
<dbReference type="CTD" id="10418"/>
<dbReference type="MGI" id="MGI:2385287">
    <property type="gene designation" value="Spon1"/>
</dbReference>
<dbReference type="VEuPathDB" id="HostDB:ENSMUSG00000038156"/>
<dbReference type="eggNOG" id="KOG3539">
    <property type="taxonomic scope" value="Eukaryota"/>
</dbReference>
<dbReference type="GeneTree" id="ENSGT00940000154910"/>
<dbReference type="HOGENOM" id="CLU_014540_1_0_1"/>
<dbReference type="InParanoid" id="Q8VCC9"/>
<dbReference type="OMA" id="IPRIEGC"/>
<dbReference type="OrthoDB" id="347314at2759"/>
<dbReference type="PhylomeDB" id="Q8VCC9"/>
<dbReference type="TreeFam" id="TF313353"/>
<dbReference type="Reactome" id="R-MMU-5173214">
    <property type="pathway name" value="O-glycosylation of TSR domain-containing proteins"/>
</dbReference>
<dbReference type="BioGRID-ORCS" id="233744">
    <property type="hits" value="0 hits in 76 CRISPR screens"/>
</dbReference>
<dbReference type="ChiTaRS" id="Spon1">
    <property type="organism name" value="mouse"/>
</dbReference>
<dbReference type="PRO" id="PR:Q8VCC9"/>
<dbReference type="Proteomes" id="UP000000589">
    <property type="component" value="Chromosome 7"/>
</dbReference>
<dbReference type="RNAct" id="Q8VCC9">
    <property type="molecule type" value="protein"/>
</dbReference>
<dbReference type="Bgee" id="ENSMUSG00000038156">
    <property type="expression patterns" value="Expressed in epithelium of lens and 232 other cell types or tissues"/>
</dbReference>
<dbReference type="ExpressionAtlas" id="Q8VCC9">
    <property type="expression patterns" value="baseline and differential"/>
</dbReference>
<dbReference type="GO" id="GO:0062023">
    <property type="term" value="C:collagen-containing extracellular matrix"/>
    <property type="evidence" value="ECO:0007005"/>
    <property type="project" value="BHF-UCL"/>
</dbReference>
<dbReference type="GO" id="GO:0005576">
    <property type="term" value="C:extracellular region"/>
    <property type="evidence" value="ECO:0007669"/>
    <property type="project" value="UniProtKB-KW"/>
</dbReference>
<dbReference type="GO" id="GO:0050693">
    <property type="term" value="F:LBD domain binding"/>
    <property type="evidence" value="ECO:0000353"/>
    <property type="project" value="MGI"/>
</dbReference>
<dbReference type="GO" id="GO:0046872">
    <property type="term" value="F:metal ion binding"/>
    <property type="evidence" value="ECO:0007669"/>
    <property type="project" value="UniProtKB-KW"/>
</dbReference>
<dbReference type="GO" id="GO:0007155">
    <property type="term" value="P:cell adhesion"/>
    <property type="evidence" value="ECO:0007669"/>
    <property type="project" value="UniProtKB-KW"/>
</dbReference>
<dbReference type="GO" id="GO:1902430">
    <property type="term" value="P:negative regulation of amyloid-beta formation"/>
    <property type="evidence" value="ECO:0000314"/>
    <property type="project" value="MGI"/>
</dbReference>
<dbReference type="GO" id="GO:1902993">
    <property type="term" value="P:positive regulation of amyloid precursor protein catabolic process"/>
    <property type="evidence" value="ECO:0000314"/>
    <property type="project" value="MGI"/>
</dbReference>
<dbReference type="GO" id="GO:0010954">
    <property type="term" value="P:positive regulation of protein processing"/>
    <property type="evidence" value="ECO:0000314"/>
    <property type="project" value="MGI"/>
</dbReference>
<dbReference type="GO" id="GO:0016485">
    <property type="term" value="P:protein processing"/>
    <property type="evidence" value="ECO:0000314"/>
    <property type="project" value="MGI"/>
</dbReference>
<dbReference type="CDD" id="cd08544">
    <property type="entry name" value="Reeler"/>
    <property type="match status" value="1"/>
</dbReference>
<dbReference type="FunFam" id="2.20.100.10:FF:000026">
    <property type="entry name" value="Spondin 1"/>
    <property type="match status" value="1"/>
</dbReference>
<dbReference type="FunFam" id="2.20.100.10:FF:000013">
    <property type="entry name" value="Spondin 1a"/>
    <property type="match status" value="2"/>
</dbReference>
<dbReference type="FunFam" id="2.60.40.2130:FF:000001">
    <property type="entry name" value="Spondin 1a"/>
    <property type="match status" value="1"/>
</dbReference>
<dbReference type="FunFam" id="2.20.100.10:FF:000024">
    <property type="entry name" value="Spondin-1"/>
    <property type="match status" value="1"/>
</dbReference>
<dbReference type="FunFam" id="2.20.100.10:FF:000034">
    <property type="entry name" value="Spondin-1"/>
    <property type="match status" value="1"/>
</dbReference>
<dbReference type="FunFam" id="2.20.100.10:FF:000081">
    <property type="entry name" value="Spondin-1"/>
    <property type="match status" value="1"/>
</dbReference>
<dbReference type="FunFam" id="2.60.40.4060:FF:000002">
    <property type="entry name" value="Spondin-1"/>
    <property type="match status" value="1"/>
</dbReference>
<dbReference type="Gene3D" id="2.60.40.2130">
    <property type="entry name" value="F-spondin domain"/>
    <property type="match status" value="1"/>
</dbReference>
<dbReference type="Gene3D" id="2.60.40.4060">
    <property type="entry name" value="Reeler domain"/>
    <property type="match status" value="1"/>
</dbReference>
<dbReference type="Gene3D" id="2.20.100.10">
    <property type="entry name" value="Thrombospondin type-1 (TSP1) repeat"/>
    <property type="match status" value="6"/>
</dbReference>
<dbReference type="InterPro" id="IPR002861">
    <property type="entry name" value="Reeler_dom"/>
</dbReference>
<dbReference type="InterPro" id="IPR042307">
    <property type="entry name" value="Reeler_sf"/>
</dbReference>
<dbReference type="InterPro" id="IPR051418">
    <property type="entry name" value="Spondin/Thrombospondin_T1"/>
</dbReference>
<dbReference type="InterPro" id="IPR009465">
    <property type="entry name" value="Spondin_N"/>
</dbReference>
<dbReference type="InterPro" id="IPR038678">
    <property type="entry name" value="Spondin_N_sf"/>
</dbReference>
<dbReference type="InterPro" id="IPR000884">
    <property type="entry name" value="TSP1_rpt"/>
</dbReference>
<dbReference type="InterPro" id="IPR036383">
    <property type="entry name" value="TSP1_rpt_sf"/>
</dbReference>
<dbReference type="InterPro" id="IPR044004">
    <property type="entry name" value="TSP1_spondin_dom"/>
</dbReference>
<dbReference type="NCBIfam" id="NF038123">
    <property type="entry name" value="NF038123_dom"/>
    <property type="match status" value="1"/>
</dbReference>
<dbReference type="PANTHER" id="PTHR11311">
    <property type="entry name" value="SPONDIN"/>
    <property type="match status" value="1"/>
</dbReference>
<dbReference type="PANTHER" id="PTHR11311:SF16">
    <property type="entry name" value="SPONDIN-1"/>
    <property type="match status" value="1"/>
</dbReference>
<dbReference type="Pfam" id="PF02014">
    <property type="entry name" value="Reeler"/>
    <property type="match status" value="1"/>
</dbReference>
<dbReference type="Pfam" id="PF06468">
    <property type="entry name" value="Spond_N"/>
    <property type="match status" value="1"/>
</dbReference>
<dbReference type="Pfam" id="PF19028">
    <property type="entry name" value="TSP1_spondin"/>
    <property type="match status" value="1"/>
</dbReference>
<dbReference type="Pfam" id="PF00090">
    <property type="entry name" value="TSP_1"/>
    <property type="match status" value="5"/>
</dbReference>
<dbReference type="SMART" id="SM00209">
    <property type="entry name" value="TSP1"/>
    <property type="match status" value="6"/>
</dbReference>
<dbReference type="SUPFAM" id="SSF82895">
    <property type="entry name" value="TSP-1 type 1 repeat"/>
    <property type="match status" value="6"/>
</dbReference>
<dbReference type="PROSITE" id="PS51019">
    <property type="entry name" value="REELIN"/>
    <property type="match status" value="1"/>
</dbReference>
<dbReference type="PROSITE" id="PS51020">
    <property type="entry name" value="SPONDIN"/>
    <property type="match status" value="1"/>
</dbReference>
<dbReference type="PROSITE" id="PS50092">
    <property type="entry name" value="TSP1"/>
    <property type="match status" value="6"/>
</dbReference>
<keyword id="KW-0130">Cell adhesion</keyword>
<keyword id="KW-1015">Disulfide bond</keyword>
<keyword id="KW-0272">Extracellular matrix</keyword>
<keyword id="KW-0325">Glycoprotein</keyword>
<keyword id="KW-0479">Metal-binding</keyword>
<keyword id="KW-1185">Reference proteome</keyword>
<keyword id="KW-0677">Repeat</keyword>
<keyword id="KW-0964">Secreted</keyword>
<keyword id="KW-0732">Signal</keyword>
<accession>Q8VCC9</accession>
<accession>Q8K2Q8</accession>
<protein>
    <recommendedName>
        <fullName>Spondin-1</fullName>
    </recommendedName>
    <alternativeName>
        <fullName>F-spondin</fullName>
    </alternativeName>
</protein>
<gene>
    <name type="primary">Spon1</name>
</gene>
<name>SPON1_MOUSE</name>
<comment type="function">
    <text evidence="1">Cell adhesion protein that promotes the attachment of spinal cord and sensory neuron cells and the outgrowth of neurites in vitro. May contribute to the growth and guidance of axons in both the spinal cord and the PNS (By similarity).</text>
</comment>
<comment type="subunit">
    <text evidence="1">Binds to the central extracellular domain of APP and inhibits beta-secretase cleavage of APP.</text>
</comment>
<comment type="subcellular location">
    <subcellularLocation>
        <location evidence="1">Secreted</location>
        <location evidence="1">Extracellular space</location>
        <location evidence="1">Extracellular matrix</location>
    </subcellularLocation>
</comment>
<comment type="sequence caution" evidence="8">
    <conflict type="erroneous initiation">
        <sequence resource="EMBL-CDS" id="AAH30339"/>
    </conflict>
</comment>
<evidence type="ECO:0000250" key="1"/>
<evidence type="ECO:0000250" key="2">
    <source>
        <dbReference type="UniProtKB" id="Q9HCB6"/>
    </source>
</evidence>
<evidence type="ECO:0000255" key="3"/>
<evidence type="ECO:0000255" key="4">
    <source>
        <dbReference type="PROSITE-ProRule" id="PRU00210"/>
    </source>
</evidence>
<evidence type="ECO:0000255" key="5">
    <source>
        <dbReference type="PROSITE-ProRule" id="PRU00363"/>
    </source>
</evidence>
<evidence type="ECO:0000255" key="6">
    <source>
        <dbReference type="PROSITE-ProRule" id="PRU00364"/>
    </source>
</evidence>
<evidence type="ECO:0000256" key="7">
    <source>
        <dbReference type="SAM" id="MobiDB-lite"/>
    </source>
</evidence>
<evidence type="ECO:0000305" key="8"/>